<gene>
    <name evidence="1" type="primary">lipB</name>
    <name type="ordered locus">PG_1343</name>
</gene>
<feature type="chain" id="PRO_0000062861" description="Octanoyltransferase">
    <location>
        <begin position="1"/>
        <end position="492"/>
    </location>
</feature>
<feature type="domain" description="BPL/LPL catalytic" evidence="2">
    <location>
        <begin position="305"/>
        <end position="492"/>
    </location>
</feature>
<feature type="region of interest" description="Unknown">
    <location>
        <begin position="1"/>
        <end position="255"/>
    </location>
</feature>
<feature type="region of interest" description="LipB domain">
    <location>
        <begin position="256"/>
        <end position="492"/>
    </location>
</feature>
<feature type="active site" description="Acyl-thioester intermediate" evidence="1">
    <location>
        <position position="454"/>
    </location>
</feature>
<feature type="binding site" evidence="1">
    <location>
        <begin position="350"/>
        <end position="357"/>
    </location>
    <ligand>
        <name>substrate</name>
    </ligand>
</feature>
<feature type="binding site" evidence="1">
    <location>
        <begin position="423"/>
        <end position="425"/>
    </location>
    <ligand>
        <name>substrate</name>
    </ligand>
</feature>
<feature type="binding site" evidence="1">
    <location>
        <begin position="436"/>
        <end position="438"/>
    </location>
    <ligand>
        <name>substrate</name>
    </ligand>
</feature>
<feature type="site" description="Lowers pKa of active site Cys" evidence="1">
    <location>
        <position position="420"/>
    </location>
</feature>
<dbReference type="EC" id="2.3.1.181" evidence="1"/>
<dbReference type="EMBL" id="AE015924">
    <property type="protein sequence ID" value="AAQ66409.1"/>
    <property type="molecule type" value="Genomic_DNA"/>
</dbReference>
<dbReference type="RefSeq" id="WP_005874064.1">
    <property type="nucleotide sequence ID" value="NC_002950.2"/>
</dbReference>
<dbReference type="SMR" id="Q7MUY1"/>
<dbReference type="STRING" id="242619.PG_1343"/>
<dbReference type="EnsemblBacteria" id="AAQ66409">
    <property type="protein sequence ID" value="AAQ66409"/>
    <property type="gene ID" value="PG_1343"/>
</dbReference>
<dbReference type="KEGG" id="pgi:PG_1343"/>
<dbReference type="eggNOG" id="COG0321">
    <property type="taxonomic scope" value="Bacteria"/>
</dbReference>
<dbReference type="eggNOG" id="COG1235">
    <property type="taxonomic scope" value="Bacteria"/>
</dbReference>
<dbReference type="HOGENOM" id="CLU_053840_0_0_10"/>
<dbReference type="BioCyc" id="PGIN242619:G1G02-1248-MONOMER"/>
<dbReference type="UniPathway" id="UPA00538">
    <property type="reaction ID" value="UER00592"/>
</dbReference>
<dbReference type="Proteomes" id="UP000000588">
    <property type="component" value="Chromosome"/>
</dbReference>
<dbReference type="GO" id="GO:0005737">
    <property type="term" value="C:cytoplasm"/>
    <property type="evidence" value="ECO:0007669"/>
    <property type="project" value="UniProtKB-SubCell"/>
</dbReference>
<dbReference type="GO" id="GO:0033819">
    <property type="term" value="F:lipoyl(octanoyl) transferase activity"/>
    <property type="evidence" value="ECO:0007669"/>
    <property type="project" value="UniProtKB-EC"/>
</dbReference>
<dbReference type="GO" id="GO:0036211">
    <property type="term" value="P:protein modification process"/>
    <property type="evidence" value="ECO:0007669"/>
    <property type="project" value="InterPro"/>
</dbReference>
<dbReference type="CDD" id="cd16444">
    <property type="entry name" value="LipB"/>
    <property type="match status" value="1"/>
</dbReference>
<dbReference type="CDD" id="cd16279">
    <property type="entry name" value="metallo-hydrolase-like_MBL-fold"/>
    <property type="match status" value="1"/>
</dbReference>
<dbReference type="Gene3D" id="3.30.930.10">
    <property type="entry name" value="Bira Bifunctional Protein, Domain 2"/>
    <property type="match status" value="1"/>
</dbReference>
<dbReference type="Gene3D" id="3.60.15.10">
    <property type="entry name" value="Ribonuclease Z/Hydroxyacylglutathione hydrolase-like"/>
    <property type="match status" value="1"/>
</dbReference>
<dbReference type="HAMAP" id="MF_00013">
    <property type="entry name" value="LipB"/>
    <property type="match status" value="1"/>
</dbReference>
<dbReference type="InterPro" id="IPR045864">
    <property type="entry name" value="aa-tRNA-synth_II/BPL/LPL"/>
</dbReference>
<dbReference type="InterPro" id="IPR004143">
    <property type="entry name" value="BPL_LPL_catalytic"/>
</dbReference>
<dbReference type="InterPro" id="IPR001279">
    <property type="entry name" value="Metallo-B-lactamas"/>
</dbReference>
<dbReference type="InterPro" id="IPR000544">
    <property type="entry name" value="Octanoyltransferase"/>
</dbReference>
<dbReference type="InterPro" id="IPR020605">
    <property type="entry name" value="Octanoyltransferase_CS"/>
</dbReference>
<dbReference type="InterPro" id="IPR036866">
    <property type="entry name" value="RibonucZ/Hydroxyglut_hydro"/>
</dbReference>
<dbReference type="NCBIfam" id="TIGR00214">
    <property type="entry name" value="lipB"/>
    <property type="match status" value="1"/>
</dbReference>
<dbReference type="NCBIfam" id="NF002553">
    <property type="entry name" value="PRK02113.1"/>
    <property type="match status" value="1"/>
</dbReference>
<dbReference type="NCBIfam" id="NF010925">
    <property type="entry name" value="PRK14345.1"/>
    <property type="match status" value="1"/>
</dbReference>
<dbReference type="PANTHER" id="PTHR10993">
    <property type="entry name" value="OCTANOYLTRANSFERASE"/>
    <property type="match status" value="1"/>
</dbReference>
<dbReference type="PANTHER" id="PTHR10993:SF12">
    <property type="entry name" value="OCTANOYLTRANSFERASE"/>
    <property type="match status" value="1"/>
</dbReference>
<dbReference type="Pfam" id="PF12706">
    <property type="entry name" value="Lactamase_B_2"/>
    <property type="match status" value="1"/>
</dbReference>
<dbReference type="Pfam" id="PF21948">
    <property type="entry name" value="LplA-B_cat"/>
    <property type="match status" value="1"/>
</dbReference>
<dbReference type="SMART" id="SM00849">
    <property type="entry name" value="Lactamase_B"/>
    <property type="match status" value="1"/>
</dbReference>
<dbReference type="SUPFAM" id="SSF55681">
    <property type="entry name" value="Class II aaRS and biotin synthetases"/>
    <property type="match status" value="1"/>
</dbReference>
<dbReference type="SUPFAM" id="SSF56281">
    <property type="entry name" value="Metallo-hydrolase/oxidoreductase"/>
    <property type="match status" value="1"/>
</dbReference>
<dbReference type="PROSITE" id="PS51733">
    <property type="entry name" value="BPL_LPL_CATALYTIC"/>
    <property type="match status" value="1"/>
</dbReference>
<dbReference type="PROSITE" id="PS01313">
    <property type="entry name" value="LIPB"/>
    <property type="match status" value="1"/>
</dbReference>
<organism>
    <name type="scientific">Porphyromonas gingivalis (strain ATCC BAA-308 / W83)</name>
    <dbReference type="NCBI Taxonomy" id="242619"/>
    <lineage>
        <taxon>Bacteria</taxon>
        <taxon>Pseudomonadati</taxon>
        <taxon>Bacteroidota</taxon>
        <taxon>Bacteroidia</taxon>
        <taxon>Bacteroidales</taxon>
        <taxon>Porphyromonadaceae</taxon>
        <taxon>Porphyromonas</taxon>
    </lineage>
</organism>
<keyword id="KW-0012">Acyltransferase</keyword>
<keyword id="KW-0963">Cytoplasm</keyword>
<keyword id="KW-1185">Reference proteome</keyword>
<keyword id="KW-0808">Transferase</keyword>
<sequence>MRCILLGSGTSTGVPEVGCHCRVCRSEDRHDKRTRTSLLIITDAGKRILIDCSPDFRQQALFAGIDSLDAVLLTHEHFDHVGGLDDLRTICWHRELAVYAEQNVLDSIRDRLHYVFRKNPYPGTPLLKLCEVKPDMPFQVADLTVEPLRIMHGRLPILGYKIGEMAFLTDMKDIAAEEIECLKSCRLLFINGLRYRKEHPSHQTIEQAIDTIGQIGNPESVLIHLSHHAPLHQEHLEILPPHIHSGYDGLEAIIDEKGIRIKDFEPHVSRSEYHYQDCGRIGYESALTLQRKLFHDAVADKLENRKPQNTLLFCEHEPVLTLGKHGHEENLLLSESELKSRDIRLFHIERGGDITYHGPGQITGYPIFDLEQYGIGLRSYIEMLEQCIIDLIAIFGLKGERSAGASGVWLDPDIPGRTRKICAIGVKSSRHITMHGFALNVNTDLDYFKLINPCGFSDRGVTSISRELGREQDFILVKQQLEAVFRRNFGAL</sequence>
<name>LIPB_PORGI</name>
<protein>
    <recommendedName>
        <fullName evidence="1">Octanoyltransferase</fullName>
        <ecNumber evidence="1">2.3.1.181</ecNumber>
    </recommendedName>
    <alternativeName>
        <fullName evidence="1">Lipoate-protein ligase B</fullName>
    </alternativeName>
    <alternativeName>
        <fullName evidence="1">Lipoyl/octanoyl transferase</fullName>
    </alternativeName>
    <alternativeName>
        <fullName evidence="1">Octanoyl-[acyl-carrier-protein]-protein N-octanoyltransferase</fullName>
    </alternativeName>
</protein>
<accession>Q7MUY1</accession>
<reference key="1">
    <citation type="journal article" date="2003" name="J. Bacteriol.">
        <title>Complete genome sequence of the oral pathogenic bacterium Porphyromonas gingivalis strain W83.</title>
        <authorList>
            <person name="Nelson K.E."/>
            <person name="Fleischmann R.D."/>
            <person name="DeBoy R.T."/>
            <person name="Paulsen I.T."/>
            <person name="Fouts D.E."/>
            <person name="Eisen J.A."/>
            <person name="Daugherty S.C."/>
            <person name="Dodson R.J."/>
            <person name="Durkin A.S."/>
            <person name="Gwinn M.L."/>
            <person name="Haft D.H."/>
            <person name="Kolonay J.F."/>
            <person name="Nelson W.C."/>
            <person name="Mason T.M."/>
            <person name="Tallon L."/>
            <person name="Gray J."/>
            <person name="Granger D."/>
            <person name="Tettelin H."/>
            <person name="Dong H."/>
            <person name="Galvin J.L."/>
            <person name="Duncan M.J."/>
            <person name="Dewhirst F.E."/>
            <person name="Fraser C.M."/>
        </authorList>
    </citation>
    <scope>NUCLEOTIDE SEQUENCE [LARGE SCALE GENOMIC DNA]</scope>
    <source>
        <strain>ATCC BAA-308 / W83</strain>
    </source>
</reference>
<proteinExistence type="inferred from homology"/>
<comment type="function">
    <text evidence="1">Catalyzes the transfer of endogenously produced octanoic acid from octanoyl-acyl-carrier-protein onto the lipoyl domains of lipoate-dependent enzymes. Lipoyl-ACP can also act as a substrate although octanoyl-ACP is likely to be the physiological substrate.</text>
</comment>
<comment type="catalytic activity">
    <reaction evidence="1">
        <text>octanoyl-[ACP] + L-lysyl-[protein] = N(6)-octanoyl-L-lysyl-[protein] + holo-[ACP] + H(+)</text>
        <dbReference type="Rhea" id="RHEA:17665"/>
        <dbReference type="Rhea" id="RHEA-COMP:9636"/>
        <dbReference type="Rhea" id="RHEA-COMP:9685"/>
        <dbReference type="Rhea" id="RHEA-COMP:9752"/>
        <dbReference type="Rhea" id="RHEA-COMP:9928"/>
        <dbReference type="ChEBI" id="CHEBI:15378"/>
        <dbReference type="ChEBI" id="CHEBI:29969"/>
        <dbReference type="ChEBI" id="CHEBI:64479"/>
        <dbReference type="ChEBI" id="CHEBI:78463"/>
        <dbReference type="ChEBI" id="CHEBI:78809"/>
        <dbReference type="EC" id="2.3.1.181"/>
    </reaction>
</comment>
<comment type="pathway">
    <text evidence="1">Protein modification; protein lipoylation via endogenous pathway; protein N(6)-(lipoyl)lysine from octanoyl-[acyl-carrier-protein]: step 1/2.</text>
</comment>
<comment type="subcellular location">
    <subcellularLocation>
        <location evidence="1">Cytoplasm</location>
    </subcellularLocation>
</comment>
<comment type="miscellaneous">
    <text evidence="1">In the reaction, the free carboxyl group of octanoic acid is attached via an amide linkage to the epsilon-amino group of a specific lysine residue of lipoyl domains of lipoate-dependent enzymes.</text>
</comment>
<comment type="similarity">
    <text evidence="3">In the C-terminal section; belongs to the LipB family.</text>
</comment>
<evidence type="ECO:0000255" key="1">
    <source>
        <dbReference type="HAMAP-Rule" id="MF_00013"/>
    </source>
</evidence>
<evidence type="ECO:0000255" key="2">
    <source>
        <dbReference type="PROSITE-ProRule" id="PRU01067"/>
    </source>
</evidence>
<evidence type="ECO:0000305" key="3"/>